<proteinExistence type="inferred from homology"/>
<comment type="function">
    <text evidence="1">Channel that opens in response to stretch forces in the membrane lipid bilayer. May participate in the regulation of osmotic pressure changes within the cell.</text>
</comment>
<comment type="subunit">
    <text evidence="1">Homopentamer.</text>
</comment>
<comment type="subcellular location">
    <subcellularLocation>
        <location evidence="1">Cell inner membrane</location>
        <topology evidence="1">Multi-pass membrane protein</topology>
    </subcellularLocation>
</comment>
<comment type="similarity">
    <text evidence="1">Belongs to the MscL family.</text>
</comment>
<protein>
    <recommendedName>
        <fullName evidence="1">Large-conductance mechanosensitive channel</fullName>
    </recommendedName>
</protein>
<reference key="1">
    <citation type="journal article" date="2009" name="Appl. Environ. Microbiol.">
        <title>Rhizobium sp. strain NGR234 possesses a remarkable number of secretion systems.</title>
        <authorList>
            <person name="Schmeisser C."/>
            <person name="Liesegang H."/>
            <person name="Krysciak D."/>
            <person name="Bakkou N."/>
            <person name="Le Quere A."/>
            <person name="Wollherr A."/>
            <person name="Heinemeyer I."/>
            <person name="Morgenstern B."/>
            <person name="Pommerening-Roeser A."/>
            <person name="Flores M."/>
            <person name="Palacios R."/>
            <person name="Brenner S."/>
            <person name="Gottschalk G."/>
            <person name="Schmitz R.A."/>
            <person name="Broughton W.J."/>
            <person name="Perret X."/>
            <person name="Strittmatter A.W."/>
            <person name="Streit W.R."/>
        </authorList>
    </citation>
    <scope>NUCLEOTIDE SEQUENCE [LARGE SCALE GENOMIC DNA]</scope>
    <source>
        <strain>NBRC 101917 / NGR234</strain>
    </source>
</reference>
<dbReference type="EMBL" id="CP001389">
    <property type="protein sequence ID" value="ACP23986.1"/>
    <property type="molecule type" value="Genomic_DNA"/>
</dbReference>
<dbReference type="RefSeq" id="WP_012706771.1">
    <property type="nucleotide sequence ID" value="NC_012587.1"/>
</dbReference>
<dbReference type="RefSeq" id="YP_002824739.1">
    <property type="nucleotide sequence ID" value="NC_012587.1"/>
</dbReference>
<dbReference type="SMR" id="C3MFT5"/>
<dbReference type="STRING" id="394.NGR_c01860"/>
<dbReference type="KEGG" id="rhi:NGR_c01860"/>
<dbReference type="PATRIC" id="fig|394.7.peg.2981"/>
<dbReference type="eggNOG" id="COG1970">
    <property type="taxonomic scope" value="Bacteria"/>
</dbReference>
<dbReference type="HOGENOM" id="CLU_095787_0_1_5"/>
<dbReference type="OrthoDB" id="9810350at2"/>
<dbReference type="Proteomes" id="UP000001054">
    <property type="component" value="Chromosome"/>
</dbReference>
<dbReference type="GO" id="GO:0005886">
    <property type="term" value="C:plasma membrane"/>
    <property type="evidence" value="ECO:0007669"/>
    <property type="project" value="UniProtKB-SubCell"/>
</dbReference>
<dbReference type="GO" id="GO:0008381">
    <property type="term" value="F:mechanosensitive monoatomic ion channel activity"/>
    <property type="evidence" value="ECO:0007669"/>
    <property type="project" value="UniProtKB-UniRule"/>
</dbReference>
<dbReference type="Gene3D" id="1.10.1200.120">
    <property type="entry name" value="Large-conductance mechanosensitive channel, MscL, domain 1"/>
    <property type="match status" value="1"/>
</dbReference>
<dbReference type="HAMAP" id="MF_00115">
    <property type="entry name" value="MscL"/>
    <property type="match status" value="1"/>
</dbReference>
<dbReference type="InterPro" id="IPR019823">
    <property type="entry name" value="Mechanosensitive_channel_CS"/>
</dbReference>
<dbReference type="InterPro" id="IPR001185">
    <property type="entry name" value="MS_channel"/>
</dbReference>
<dbReference type="InterPro" id="IPR037673">
    <property type="entry name" value="MSC/AndL"/>
</dbReference>
<dbReference type="InterPro" id="IPR036019">
    <property type="entry name" value="MscL_channel"/>
</dbReference>
<dbReference type="NCBIfam" id="TIGR00220">
    <property type="entry name" value="mscL"/>
    <property type="match status" value="1"/>
</dbReference>
<dbReference type="NCBIfam" id="NF001843">
    <property type="entry name" value="PRK00567.1-4"/>
    <property type="match status" value="1"/>
</dbReference>
<dbReference type="NCBIfam" id="NF010557">
    <property type="entry name" value="PRK13952.1"/>
    <property type="match status" value="1"/>
</dbReference>
<dbReference type="PANTHER" id="PTHR30266:SF2">
    <property type="entry name" value="LARGE-CONDUCTANCE MECHANOSENSITIVE CHANNEL"/>
    <property type="match status" value="1"/>
</dbReference>
<dbReference type="PANTHER" id="PTHR30266">
    <property type="entry name" value="MECHANOSENSITIVE CHANNEL MSCL"/>
    <property type="match status" value="1"/>
</dbReference>
<dbReference type="Pfam" id="PF01741">
    <property type="entry name" value="MscL"/>
    <property type="match status" value="1"/>
</dbReference>
<dbReference type="PRINTS" id="PR01264">
    <property type="entry name" value="MECHCHANNEL"/>
</dbReference>
<dbReference type="SUPFAM" id="SSF81330">
    <property type="entry name" value="Gated mechanosensitive channel"/>
    <property type="match status" value="1"/>
</dbReference>
<dbReference type="PROSITE" id="PS01327">
    <property type="entry name" value="MSCL"/>
    <property type="match status" value="1"/>
</dbReference>
<gene>
    <name evidence="1" type="primary">mscL</name>
    <name type="ordered locus">NGR_c01860</name>
</gene>
<organism>
    <name type="scientific">Sinorhizobium fredii (strain NBRC 101917 / NGR234)</name>
    <dbReference type="NCBI Taxonomy" id="394"/>
    <lineage>
        <taxon>Bacteria</taxon>
        <taxon>Pseudomonadati</taxon>
        <taxon>Pseudomonadota</taxon>
        <taxon>Alphaproteobacteria</taxon>
        <taxon>Hyphomicrobiales</taxon>
        <taxon>Rhizobiaceae</taxon>
        <taxon>Sinorhizobium/Ensifer group</taxon>
        <taxon>Sinorhizobium</taxon>
    </lineage>
</organism>
<feature type="chain" id="PRO_1000191383" description="Large-conductance mechanosensitive channel">
    <location>
        <begin position="1"/>
        <end position="142"/>
    </location>
</feature>
<feature type="transmembrane region" description="Helical" evidence="1">
    <location>
        <begin position="14"/>
        <end position="34"/>
    </location>
</feature>
<feature type="transmembrane region" description="Helical" evidence="1">
    <location>
        <begin position="38"/>
        <end position="58"/>
    </location>
</feature>
<feature type="transmembrane region" description="Helical" evidence="1">
    <location>
        <begin position="82"/>
        <end position="102"/>
    </location>
</feature>
<evidence type="ECO:0000255" key="1">
    <source>
        <dbReference type="HAMAP-Rule" id="MF_00115"/>
    </source>
</evidence>
<keyword id="KW-0997">Cell inner membrane</keyword>
<keyword id="KW-1003">Cell membrane</keyword>
<keyword id="KW-0407">Ion channel</keyword>
<keyword id="KW-0406">Ion transport</keyword>
<keyword id="KW-0472">Membrane</keyword>
<keyword id="KW-1185">Reference proteome</keyword>
<keyword id="KW-0812">Transmembrane</keyword>
<keyword id="KW-1133">Transmembrane helix</keyword>
<keyword id="KW-0813">Transport</keyword>
<name>MSCL_SINFN</name>
<accession>C3MFT5</accession>
<sequence length="142" mass="15393">MLNEFKEFIARGNVMDLAVGVIIGAAFTKIVTSVVDDLVMPIVGAITGGGFDFSNYFLPLSANVTAPTLAAARQQGAVFAYGSFITVLINFMILAWIIFLLVKAVNRIRASVEREKAPEPAAPPPEDVRLLSEIRDILKQRA</sequence>